<feature type="peptide" id="PRO_0000436538" description="Potassium channel toxin alpha-KTx 2.17" evidence="4">
    <location>
        <begin position="1"/>
        <end position="39"/>
    </location>
</feature>
<feature type="site" description="Basic residue of the functional dyad" evidence="1">
    <location>
        <position position="28"/>
    </location>
</feature>
<feature type="modified residue" description="Isoleucine amide" evidence="3 7">
    <location>
        <position position="39"/>
    </location>
</feature>
<feature type="disulfide bond" evidence="1">
    <location>
        <begin position="7"/>
        <end position="29"/>
    </location>
</feature>
<feature type="disulfide bond" evidence="1">
    <location>
        <begin position="13"/>
        <end position="34"/>
    </location>
</feature>
<feature type="disulfide bond" evidence="1">
    <location>
        <begin position="17"/>
        <end position="36"/>
    </location>
</feature>
<comment type="function">
    <text evidence="4">Blocks human voltage-gated potassium channels Kv1.1/KCNA1 (IC(50)=4.8 nM) and Kv1.2/KCNA2 (IC(50)=2.9 nM).</text>
</comment>
<comment type="subcellular location">
    <subcellularLocation>
        <location evidence="4">Secreted</location>
    </subcellularLocation>
</comment>
<comment type="tissue specificity">
    <text evidence="7">Expressed by the venom gland.</text>
</comment>
<comment type="domain">
    <text evidence="2">Has the structural arrangement of an alpha-helix connected to a beta-sheet by disulfide bonds (CSalpha/beta).</text>
</comment>
<comment type="mass spectrometry" mass="4211.9" method="Unknown" evidence="4"/>
<comment type="miscellaneous">
    <text evidence="4">Negative results: does not block voltage-gated potassium channel Kv1.3/KCNA3, intermediate conductance calcium-activated potassium channel KCa3.1/KCNN4 or the Shaker IR (with inactivation domain removed).</text>
</comment>
<comment type="similarity">
    <text evidence="6">Belongs to the short scorpion toxin superfamily. Potassium channel inhibitor family. Alpha-KTx 02 subfamily.</text>
</comment>
<accession>C0HJW5</accession>
<organism evidence="5">
    <name type="scientific">Centruroides tecomanus</name>
    <name type="common">Scorpion</name>
    <name type="synonym">Centruroides limpidus tecomanus</name>
    <dbReference type="NCBI Taxonomy" id="1028682"/>
    <lineage>
        <taxon>Eukaryota</taxon>
        <taxon>Metazoa</taxon>
        <taxon>Ecdysozoa</taxon>
        <taxon>Arthropoda</taxon>
        <taxon>Chelicerata</taxon>
        <taxon>Arachnida</taxon>
        <taxon>Scorpiones</taxon>
        <taxon>Buthida</taxon>
        <taxon>Buthoidea</taxon>
        <taxon>Buthidae</taxon>
        <taxon>Centruroides</taxon>
    </lineage>
</organism>
<dbReference type="SMR" id="C0HJW5"/>
<dbReference type="GO" id="GO:0005576">
    <property type="term" value="C:extracellular region"/>
    <property type="evidence" value="ECO:0007669"/>
    <property type="project" value="UniProtKB-SubCell"/>
</dbReference>
<dbReference type="GO" id="GO:0008200">
    <property type="term" value="F:ion channel inhibitor activity"/>
    <property type="evidence" value="ECO:0007669"/>
    <property type="project" value="InterPro"/>
</dbReference>
<dbReference type="GO" id="GO:0015459">
    <property type="term" value="F:potassium channel regulator activity"/>
    <property type="evidence" value="ECO:0007669"/>
    <property type="project" value="UniProtKB-KW"/>
</dbReference>
<dbReference type="GO" id="GO:0090729">
    <property type="term" value="F:toxin activity"/>
    <property type="evidence" value="ECO:0007669"/>
    <property type="project" value="UniProtKB-KW"/>
</dbReference>
<dbReference type="Gene3D" id="3.30.30.10">
    <property type="entry name" value="Knottin, scorpion toxin-like"/>
    <property type="match status" value="1"/>
</dbReference>
<dbReference type="InterPro" id="IPR036574">
    <property type="entry name" value="Scorpion_toxin-like_sf"/>
</dbReference>
<dbReference type="InterPro" id="IPR001947">
    <property type="entry name" value="Scorpion_toxinS_K_inh"/>
</dbReference>
<dbReference type="Pfam" id="PF00451">
    <property type="entry name" value="Toxin_2"/>
    <property type="match status" value="1"/>
</dbReference>
<dbReference type="PRINTS" id="PR00286">
    <property type="entry name" value="CHARYBDTOXIN"/>
</dbReference>
<dbReference type="SUPFAM" id="SSF57095">
    <property type="entry name" value="Scorpion toxin-like"/>
    <property type="match status" value="1"/>
</dbReference>
<dbReference type="PROSITE" id="PS01138">
    <property type="entry name" value="SCORP_SHORT_TOXIN"/>
    <property type="match status" value="1"/>
</dbReference>
<protein>
    <recommendedName>
        <fullName evidence="5">Potassium channel toxin alpha-KTx 2.17</fullName>
    </recommendedName>
    <alternativeName>
        <fullName evidence="5">Toxin II.12.8</fullName>
    </alternativeName>
</protein>
<evidence type="ECO:0000250" key="1">
    <source>
        <dbReference type="UniProtKB" id="O46028"/>
    </source>
</evidence>
<evidence type="ECO:0000250" key="2">
    <source>
        <dbReference type="UniProtKB" id="P08815"/>
    </source>
</evidence>
<evidence type="ECO:0000250" key="3">
    <source>
        <dbReference type="UniProtKB" id="P0C165"/>
    </source>
</evidence>
<evidence type="ECO:0000269" key="4">
    <source>
    </source>
</evidence>
<evidence type="ECO:0000303" key="5">
    <source>
    </source>
</evidence>
<evidence type="ECO:0000305" key="6"/>
<evidence type="ECO:0000305" key="7">
    <source>
    </source>
</evidence>
<keyword id="KW-0027">Amidation</keyword>
<keyword id="KW-0903">Direct protein sequencing</keyword>
<keyword id="KW-1015">Disulfide bond</keyword>
<keyword id="KW-0872">Ion channel impairing toxin</keyword>
<keyword id="KW-0528">Neurotoxin</keyword>
<keyword id="KW-0632">Potassium channel impairing toxin</keyword>
<keyword id="KW-0964">Secreted</keyword>
<keyword id="KW-0800">Toxin</keyword>
<keyword id="KW-1220">Voltage-gated potassium channel impairing toxin</keyword>
<sequence length="39" mass="4218">TIINVKCTSPKQCLLPCKQIYGPHAGAKCMNGKCHCSKI</sequence>
<name>KAX2H_CENTE</name>
<reference key="1">
    <citation type="journal article" date="2016" name="Toxicon">
        <title>Isolation, chemical and functional characterization of several new K(+)-channel blocking peptides from the venom of the scorpion Centruroides tecomanus.</title>
        <authorList>
            <person name="Olamendi-Portugal T."/>
            <person name="Bartok A."/>
            <person name="Zamudio-Zuniga F."/>
            <person name="Balajthy A."/>
            <person name="Becerril B."/>
            <person name="Panyi G."/>
            <person name="Possani L.D."/>
        </authorList>
    </citation>
    <scope>PROTEIN SEQUENCE</scope>
    <scope>FUNCTION</scope>
    <scope>SUBCELLULAR LOCATION</scope>
    <scope>MASS SPECTROMETRY</scope>
    <scope>AMIDATION AT ILE-39</scope>
    <source>
        <tissue>Venom</tissue>
    </source>
</reference>
<proteinExistence type="evidence at protein level"/>